<feature type="chain" id="PRO_1000023651" description="Peptide chain release factor 3">
    <location>
        <begin position="1"/>
        <end position="527"/>
    </location>
</feature>
<feature type="domain" description="tr-type G">
    <location>
        <begin position="9"/>
        <end position="278"/>
    </location>
</feature>
<feature type="binding site" evidence="1">
    <location>
        <begin position="18"/>
        <end position="25"/>
    </location>
    <ligand>
        <name>GTP</name>
        <dbReference type="ChEBI" id="CHEBI:37565"/>
    </ligand>
</feature>
<feature type="binding site" evidence="1">
    <location>
        <begin position="86"/>
        <end position="90"/>
    </location>
    <ligand>
        <name>GTP</name>
        <dbReference type="ChEBI" id="CHEBI:37565"/>
    </ligand>
</feature>
<feature type="binding site" evidence="1">
    <location>
        <begin position="140"/>
        <end position="143"/>
    </location>
    <ligand>
        <name>GTP</name>
        <dbReference type="ChEBI" id="CHEBI:37565"/>
    </ligand>
</feature>
<proteinExistence type="inferred from homology"/>
<dbReference type="EMBL" id="CP000672">
    <property type="protein sequence ID" value="ABQ99520.1"/>
    <property type="molecule type" value="Genomic_DNA"/>
</dbReference>
<dbReference type="SMR" id="A5UFG5"/>
<dbReference type="KEGG" id="hiq:CGSHiGG_02415"/>
<dbReference type="HOGENOM" id="CLU_002794_2_1_6"/>
<dbReference type="Proteomes" id="UP000001990">
    <property type="component" value="Chromosome"/>
</dbReference>
<dbReference type="GO" id="GO:0005829">
    <property type="term" value="C:cytosol"/>
    <property type="evidence" value="ECO:0007669"/>
    <property type="project" value="TreeGrafter"/>
</dbReference>
<dbReference type="GO" id="GO:0005525">
    <property type="term" value="F:GTP binding"/>
    <property type="evidence" value="ECO:0007669"/>
    <property type="project" value="UniProtKB-UniRule"/>
</dbReference>
<dbReference type="GO" id="GO:0003924">
    <property type="term" value="F:GTPase activity"/>
    <property type="evidence" value="ECO:0007669"/>
    <property type="project" value="InterPro"/>
</dbReference>
<dbReference type="GO" id="GO:0097216">
    <property type="term" value="F:guanosine tetraphosphate binding"/>
    <property type="evidence" value="ECO:0007669"/>
    <property type="project" value="UniProtKB-ARBA"/>
</dbReference>
<dbReference type="GO" id="GO:0016150">
    <property type="term" value="F:translation release factor activity, codon nonspecific"/>
    <property type="evidence" value="ECO:0007669"/>
    <property type="project" value="TreeGrafter"/>
</dbReference>
<dbReference type="GO" id="GO:0016149">
    <property type="term" value="F:translation release factor activity, codon specific"/>
    <property type="evidence" value="ECO:0007669"/>
    <property type="project" value="UniProtKB-UniRule"/>
</dbReference>
<dbReference type="GO" id="GO:0006449">
    <property type="term" value="P:regulation of translational termination"/>
    <property type="evidence" value="ECO:0007669"/>
    <property type="project" value="UniProtKB-UniRule"/>
</dbReference>
<dbReference type="CDD" id="cd04169">
    <property type="entry name" value="RF3"/>
    <property type="match status" value="1"/>
</dbReference>
<dbReference type="CDD" id="cd03689">
    <property type="entry name" value="RF3_II"/>
    <property type="match status" value="1"/>
</dbReference>
<dbReference type="CDD" id="cd16259">
    <property type="entry name" value="RF3_III"/>
    <property type="match status" value="1"/>
</dbReference>
<dbReference type="FunFam" id="2.40.30.10:FF:000040">
    <property type="entry name" value="Peptide chain release factor 3"/>
    <property type="match status" value="1"/>
</dbReference>
<dbReference type="FunFam" id="3.30.70.3280:FF:000001">
    <property type="entry name" value="Peptide chain release factor 3"/>
    <property type="match status" value="1"/>
</dbReference>
<dbReference type="FunFam" id="3.40.50.300:FF:000542">
    <property type="entry name" value="Peptide chain release factor 3"/>
    <property type="match status" value="1"/>
</dbReference>
<dbReference type="Gene3D" id="3.40.50.300">
    <property type="entry name" value="P-loop containing nucleotide triphosphate hydrolases"/>
    <property type="match status" value="2"/>
</dbReference>
<dbReference type="Gene3D" id="3.30.70.3280">
    <property type="entry name" value="Peptide chain release factor 3, domain III"/>
    <property type="match status" value="1"/>
</dbReference>
<dbReference type="HAMAP" id="MF_00072">
    <property type="entry name" value="Rel_fac_3"/>
    <property type="match status" value="1"/>
</dbReference>
<dbReference type="InterPro" id="IPR053905">
    <property type="entry name" value="EF-G-like_DII"/>
</dbReference>
<dbReference type="InterPro" id="IPR035647">
    <property type="entry name" value="EFG_III/V"/>
</dbReference>
<dbReference type="InterPro" id="IPR031157">
    <property type="entry name" value="G_TR_CS"/>
</dbReference>
<dbReference type="InterPro" id="IPR027417">
    <property type="entry name" value="P-loop_NTPase"/>
</dbReference>
<dbReference type="InterPro" id="IPR004548">
    <property type="entry name" value="PrfC"/>
</dbReference>
<dbReference type="InterPro" id="IPR032090">
    <property type="entry name" value="RF3_C"/>
</dbReference>
<dbReference type="InterPro" id="IPR038467">
    <property type="entry name" value="RF3_dom_3_sf"/>
</dbReference>
<dbReference type="InterPro" id="IPR041732">
    <property type="entry name" value="RF3_GTP-bd"/>
</dbReference>
<dbReference type="InterPro" id="IPR005225">
    <property type="entry name" value="Small_GTP-bd"/>
</dbReference>
<dbReference type="InterPro" id="IPR000795">
    <property type="entry name" value="T_Tr_GTP-bd_dom"/>
</dbReference>
<dbReference type="InterPro" id="IPR009000">
    <property type="entry name" value="Transl_B-barrel_sf"/>
</dbReference>
<dbReference type="NCBIfam" id="TIGR00503">
    <property type="entry name" value="prfC"/>
    <property type="match status" value="1"/>
</dbReference>
<dbReference type="NCBIfam" id="NF001964">
    <property type="entry name" value="PRK00741.1"/>
    <property type="match status" value="1"/>
</dbReference>
<dbReference type="NCBIfam" id="TIGR00231">
    <property type="entry name" value="small_GTP"/>
    <property type="match status" value="1"/>
</dbReference>
<dbReference type="PANTHER" id="PTHR43556">
    <property type="entry name" value="PEPTIDE CHAIN RELEASE FACTOR RF3"/>
    <property type="match status" value="1"/>
</dbReference>
<dbReference type="PANTHER" id="PTHR43556:SF2">
    <property type="entry name" value="PEPTIDE CHAIN RELEASE FACTOR RF3"/>
    <property type="match status" value="1"/>
</dbReference>
<dbReference type="Pfam" id="PF22042">
    <property type="entry name" value="EF-G_D2"/>
    <property type="match status" value="1"/>
</dbReference>
<dbReference type="Pfam" id="PF00009">
    <property type="entry name" value="GTP_EFTU"/>
    <property type="match status" value="1"/>
</dbReference>
<dbReference type="Pfam" id="PF16658">
    <property type="entry name" value="RF3_C"/>
    <property type="match status" value="1"/>
</dbReference>
<dbReference type="PRINTS" id="PR00315">
    <property type="entry name" value="ELONGATNFCT"/>
</dbReference>
<dbReference type="SUPFAM" id="SSF54980">
    <property type="entry name" value="EF-G C-terminal domain-like"/>
    <property type="match status" value="1"/>
</dbReference>
<dbReference type="SUPFAM" id="SSF52540">
    <property type="entry name" value="P-loop containing nucleoside triphosphate hydrolases"/>
    <property type="match status" value="1"/>
</dbReference>
<dbReference type="SUPFAM" id="SSF50447">
    <property type="entry name" value="Translation proteins"/>
    <property type="match status" value="1"/>
</dbReference>
<dbReference type="PROSITE" id="PS00301">
    <property type="entry name" value="G_TR_1"/>
    <property type="match status" value="1"/>
</dbReference>
<dbReference type="PROSITE" id="PS51722">
    <property type="entry name" value="G_TR_2"/>
    <property type="match status" value="1"/>
</dbReference>
<evidence type="ECO:0000255" key="1">
    <source>
        <dbReference type="HAMAP-Rule" id="MF_00072"/>
    </source>
</evidence>
<accession>A5UFG5</accession>
<sequence>MSYPLEEVNKRRTFAIISHPDAGKTTITEKVLLYGNAIQTAGSVKGKGSAAHAKSDWMEMEKQRGISITTSVMQFPYNDCLVNLLDTPGHEDFSEDTYRTLTAVDSCLMVIDSAKGVEERTIKLMEVTRLRDTPIITFMNKLDRDIRDPMELLDEVENVLKIRCAPITWPIGCGKLFKGVYHLAKDETYLYQSGQGSTIQAVRVVKGLNNPELDVAVGDDLAQQLRDELELVQGASNEFEQDAFIKGELTPVFFGTALGNFGVDHFLDGLTQWAPKPQSRQADTRTVESAEEKFSGFVFKIQANMDPKHRDRVAFMRVVSGKYEKGMKLKHVRIGKDVVISDALTFMAGDRAHAEEAYAGDIIGLHNHGTIQIGDTFTQGETLKFTGIPNFAPELFRRIRLKDPLKQKQLLKGLVQLSEEGAVQVFRPLLNNDLIVGAVGVLQFDVVVSRLKTEYNVEAIYENVNVATARWVECADGKKFEEFKRKNEQNLALDGGDNLTYIAPTMVNLNLAQERYPDVVFYKTREH</sequence>
<comment type="function">
    <text evidence="1">Increases the formation of ribosomal termination complexes and stimulates activities of RF-1 and RF-2. It binds guanine nucleotides and has strong preference for UGA stop codons. It may interact directly with the ribosome. The stimulation of RF-1 and RF-2 is significantly reduced by GTP and GDP, but not by GMP.</text>
</comment>
<comment type="subcellular location">
    <subcellularLocation>
        <location evidence="1">Cytoplasm</location>
    </subcellularLocation>
</comment>
<comment type="similarity">
    <text evidence="1">Belongs to the TRAFAC class translation factor GTPase superfamily. Classic translation factor GTPase family. PrfC subfamily.</text>
</comment>
<reference key="1">
    <citation type="journal article" date="2007" name="Genome Biol.">
        <title>Characterization and modeling of the Haemophilus influenzae core and supragenomes based on the complete genomic sequences of Rd and 12 clinical nontypeable strains.</title>
        <authorList>
            <person name="Hogg J.S."/>
            <person name="Hu F.Z."/>
            <person name="Janto B."/>
            <person name="Boissy R."/>
            <person name="Hayes J."/>
            <person name="Keefe R."/>
            <person name="Post J.C."/>
            <person name="Ehrlich G.D."/>
        </authorList>
    </citation>
    <scope>NUCLEOTIDE SEQUENCE [LARGE SCALE GENOMIC DNA]</scope>
    <source>
        <strain>PittGG</strain>
    </source>
</reference>
<gene>
    <name evidence="1" type="primary">prfC</name>
    <name type="ordered locus">CGSHiGG_02415</name>
</gene>
<organism>
    <name type="scientific">Haemophilus influenzae (strain PittGG)</name>
    <dbReference type="NCBI Taxonomy" id="374931"/>
    <lineage>
        <taxon>Bacteria</taxon>
        <taxon>Pseudomonadati</taxon>
        <taxon>Pseudomonadota</taxon>
        <taxon>Gammaproteobacteria</taxon>
        <taxon>Pasteurellales</taxon>
        <taxon>Pasteurellaceae</taxon>
        <taxon>Haemophilus</taxon>
    </lineage>
</organism>
<keyword id="KW-0963">Cytoplasm</keyword>
<keyword id="KW-0342">GTP-binding</keyword>
<keyword id="KW-0547">Nucleotide-binding</keyword>
<keyword id="KW-0648">Protein biosynthesis</keyword>
<protein>
    <recommendedName>
        <fullName evidence="1">Peptide chain release factor 3</fullName>
        <shortName evidence="1">RF-3</shortName>
    </recommendedName>
</protein>
<name>RF3_HAEIG</name>